<organism>
    <name type="scientific">Escherichia coli O6:H1 (strain CFT073 / ATCC 700928 / UPEC)</name>
    <dbReference type="NCBI Taxonomy" id="199310"/>
    <lineage>
        <taxon>Bacteria</taxon>
        <taxon>Pseudomonadati</taxon>
        <taxon>Pseudomonadota</taxon>
        <taxon>Gammaproteobacteria</taxon>
        <taxon>Enterobacterales</taxon>
        <taxon>Enterobacteriaceae</taxon>
        <taxon>Escherichia</taxon>
    </lineage>
</organism>
<gene>
    <name type="primary">dadX</name>
    <name type="ordered locus">c1639</name>
</gene>
<dbReference type="EC" id="5.1.1.1"/>
<dbReference type="EMBL" id="AF081283">
    <property type="protein sequence ID" value="AAC61705.1"/>
    <property type="molecule type" value="Genomic_DNA"/>
</dbReference>
<dbReference type="EMBL" id="AE014075">
    <property type="protein sequence ID" value="AAN80104.1"/>
    <property type="molecule type" value="Genomic_DNA"/>
</dbReference>
<dbReference type="RefSeq" id="WP_000197877.1">
    <property type="nucleotide sequence ID" value="NZ_CP051263.1"/>
</dbReference>
<dbReference type="SMR" id="P59237"/>
<dbReference type="STRING" id="199310.c1639"/>
<dbReference type="KEGG" id="ecc:c1639"/>
<dbReference type="eggNOG" id="COG0787">
    <property type="taxonomic scope" value="Bacteria"/>
</dbReference>
<dbReference type="HOGENOM" id="CLU_028393_1_0_6"/>
<dbReference type="BioCyc" id="ECOL199310:C1639-MONOMER"/>
<dbReference type="Proteomes" id="UP000001410">
    <property type="component" value="Chromosome"/>
</dbReference>
<dbReference type="GO" id="GO:0005829">
    <property type="term" value="C:cytosol"/>
    <property type="evidence" value="ECO:0007669"/>
    <property type="project" value="TreeGrafter"/>
</dbReference>
<dbReference type="GO" id="GO:0008784">
    <property type="term" value="F:alanine racemase activity"/>
    <property type="evidence" value="ECO:0007669"/>
    <property type="project" value="UniProtKB-UniRule"/>
</dbReference>
<dbReference type="GO" id="GO:0030170">
    <property type="term" value="F:pyridoxal phosphate binding"/>
    <property type="evidence" value="ECO:0007669"/>
    <property type="project" value="UniProtKB-UniRule"/>
</dbReference>
<dbReference type="GO" id="GO:0030632">
    <property type="term" value="P:D-alanine biosynthetic process"/>
    <property type="evidence" value="ECO:0007669"/>
    <property type="project" value="UniProtKB-UniRule"/>
</dbReference>
<dbReference type="CDD" id="cd06827">
    <property type="entry name" value="PLPDE_III_AR_proteobact"/>
    <property type="match status" value="1"/>
</dbReference>
<dbReference type="FunFam" id="2.40.37.10:FF:000002">
    <property type="entry name" value="Alanine racemase"/>
    <property type="match status" value="1"/>
</dbReference>
<dbReference type="FunFam" id="3.20.20.10:FF:000002">
    <property type="entry name" value="Alanine racemase"/>
    <property type="match status" value="1"/>
</dbReference>
<dbReference type="Gene3D" id="3.20.20.10">
    <property type="entry name" value="Alanine racemase"/>
    <property type="match status" value="1"/>
</dbReference>
<dbReference type="Gene3D" id="2.40.37.10">
    <property type="entry name" value="Lyase, Ornithine Decarboxylase, Chain A, domain 1"/>
    <property type="match status" value="1"/>
</dbReference>
<dbReference type="HAMAP" id="MF_01201">
    <property type="entry name" value="Ala_racemase"/>
    <property type="match status" value="1"/>
</dbReference>
<dbReference type="InterPro" id="IPR000821">
    <property type="entry name" value="Ala_racemase"/>
</dbReference>
<dbReference type="InterPro" id="IPR009006">
    <property type="entry name" value="Ala_racemase/Decarboxylase_C"/>
</dbReference>
<dbReference type="InterPro" id="IPR011079">
    <property type="entry name" value="Ala_racemase_C"/>
</dbReference>
<dbReference type="InterPro" id="IPR001608">
    <property type="entry name" value="Ala_racemase_N"/>
</dbReference>
<dbReference type="InterPro" id="IPR020622">
    <property type="entry name" value="Ala_racemase_pyridoxalP-BS"/>
</dbReference>
<dbReference type="InterPro" id="IPR029066">
    <property type="entry name" value="PLP-binding_barrel"/>
</dbReference>
<dbReference type="NCBIfam" id="TIGR00492">
    <property type="entry name" value="alr"/>
    <property type="match status" value="1"/>
</dbReference>
<dbReference type="NCBIfam" id="NF002970">
    <property type="entry name" value="PRK03646.1"/>
    <property type="match status" value="1"/>
</dbReference>
<dbReference type="PANTHER" id="PTHR30511">
    <property type="entry name" value="ALANINE RACEMASE"/>
    <property type="match status" value="1"/>
</dbReference>
<dbReference type="PANTHER" id="PTHR30511:SF0">
    <property type="entry name" value="ALANINE RACEMASE, CATABOLIC-RELATED"/>
    <property type="match status" value="1"/>
</dbReference>
<dbReference type="Pfam" id="PF00842">
    <property type="entry name" value="Ala_racemase_C"/>
    <property type="match status" value="1"/>
</dbReference>
<dbReference type="Pfam" id="PF01168">
    <property type="entry name" value="Ala_racemase_N"/>
    <property type="match status" value="1"/>
</dbReference>
<dbReference type="PRINTS" id="PR00992">
    <property type="entry name" value="ALARACEMASE"/>
</dbReference>
<dbReference type="SMART" id="SM01005">
    <property type="entry name" value="Ala_racemase_C"/>
    <property type="match status" value="1"/>
</dbReference>
<dbReference type="SUPFAM" id="SSF50621">
    <property type="entry name" value="Alanine racemase C-terminal domain-like"/>
    <property type="match status" value="1"/>
</dbReference>
<dbReference type="SUPFAM" id="SSF51419">
    <property type="entry name" value="PLP-binding barrel"/>
    <property type="match status" value="1"/>
</dbReference>
<dbReference type="PROSITE" id="PS00395">
    <property type="entry name" value="ALANINE_RACEMASE"/>
    <property type="match status" value="1"/>
</dbReference>
<proteinExistence type="inferred from homology"/>
<reference key="1">
    <citation type="journal article" date="1998" name="Infect. Immun.">
        <title>Genomic analysis of a pathogenicity island in uropathogenic Escherichia coli CFT073: distribution of homologous sequences among isolates from patients with pyelonephritis, cystitis, and catheter-associated bacteriuria and from fecal samples.</title>
        <authorList>
            <person name="Guyer D.M."/>
            <person name="Kao J.-S."/>
            <person name="Mobley H.L.T."/>
        </authorList>
    </citation>
    <scope>NUCLEOTIDE SEQUENCE [GENOMIC DNA]</scope>
    <source>
        <strain>CFT073 / ATCC 700928 / UPEC</strain>
    </source>
</reference>
<reference key="2">
    <citation type="journal article" date="2002" name="Proc. Natl. Acad. Sci. U.S.A.">
        <title>Extensive mosaic structure revealed by the complete genome sequence of uropathogenic Escherichia coli.</title>
        <authorList>
            <person name="Welch R.A."/>
            <person name="Burland V."/>
            <person name="Plunkett G. III"/>
            <person name="Redford P."/>
            <person name="Roesch P."/>
            <person name="Rasko D."/>
            <person name="Buckles E.L."/>
            <person name="Liou S.-R."/>
            <person name="Boutin A."/>
            <person name="Hackett J."/>
            <person name="Stroud D."/>
            <person name="Mayhew G.F."/>
            <person name="Rose D.J."/>
            <person name="Zhou S."/>
            <person name="Schwartz D.C."/>
            <person name="Perna N.T."/>
            <person name="Mobley H.L.T."/>
            <person name="Donnenberg M.S."/>
            <person name="Blattner F.R."/>
        </authorList>
    </citation>
    <scope>NUCLEOTIDE SEQUENCE [LARGE SCALE GENOMIC DNA]</scope>
    <source>
        <strain>CFT073 / ATCC 700928 / UPEC</strain>
    </source>
</reference>
<comment type="function">
    <text evidence="1">Isomerizes L-alanine to D-alanine which is then oxidized to pyruvate by DadA.</text>
</comment>
<comment type="catalytic activity">
    <reaction>
        <text>L-alanine = D-alanine</text>
        <dbReference type="Rhea" id="RHEA:20249"/>
        <dbReference type="ChEBI" id="CHEBI:57416"/>
        <dbReference type="ChEBI" id="CHEBI:57972"/>
        <dbReference type="EC" id="5.1.1.1"/>
    </reaction>
</comment>
<comment type="cofactor">
    <cofactor evidence="1">
        <name>pyridoxal 5'-phosphate</name>
        <dbReference type="ChEBI" id="CHEBI:597326"/>
    </cofactor>
</comment>
<comment type="similarity">
    <text evidence="2">Belongs to the alanine racemase family.</text>
</comment>
<accession>P59237</accession>
<protein>
    <recommendedName>
        <fullName>Alanine racemase, catabolic</fullName>
        <ecNumber>5.1.1.1</ecNumber>
    </recommendedName>
</protein>
<feature type="chain" id="PRO_0000114518" description="Alanine racemase, catabolic">
    <location>
        <begin position="1"/>
        <end position="356"/>
    </location>
</feature>
<feature type="active site" description="Proton acceptor; specific for D-alanine" evidence="1">
    <location>
        <position position="35"/>
    </location>
</feature>
<feature type="active site" description="Proton acceptor; specific for L-alanine" evidence="1">
    <location>
        <position position="253"/>
    </location>
</feature>
<feature type="binding site" evidence="1">
    <location>
        <position position="130"/>
    </location>
    <ligand>
        <name>substrate</name>
    </ligand>
</feature>
<feature type="binding site" evidence="1">
    <location>
        <position position="301"/>
    </location>
    <ligand>
        <name>substrate</name>
    </ligand>
</feature>
<feature type="modified residue" description="N6-(pyridoxal phosphate)lysine" evidence="1">
    <location>
        <position position="35"/>
    </location>
</feature>
<feature type="sequence conflict" description="In Ref. 1; AAC61705." evidence="2" ref="1">
    <original>PY</original>
    <variation>TH</variation>
    <location>
        <begin position="26"/>
        <end position="27"/>
    </location>
</feature>
<feature type="sequence conflict" description="In Ref. 1; AAC61705." evidence="2" ref="1">
    <original>L</original>
    <variation>I</variation>
    <location>
        <position position="50"/>
    </location>
</feature>
<feature type="sequence conflict" description="In Ref. 1; AAC61705." evidence="2" ref="1">
    <original>SA</original>
    <variation>GR</variation>
    <location>
        <begin position="171"/>
        <end position="172"/>
    </location>
</feature>
<feature type="sequence conflict" description="In Ref. 1; AAC61705." evidence="2" ref="1">
    <original>A</original>
    <variation>S</variation>
    <location>
        <position position="190"/>
    </location>
</feature>
<feature type="sequence conflict" description="In Ref. 1; AAC61705." evidence="2" ref="1">
    <original>Q</original>
    <variation>P</variation>
    <location>
        <position position="199"/>
    </location>
</feature>
<feature type="sequence conflict" description="In Ref. 1; AAC61705." evidence="2" ref="1">
    <original>A</original>
    <variation>R</variation>
    <location>
        <position position="215"/>
    </location>
</feature>
<feature type="sequence conflict" description="In Ref. 1; AAC61705." evidence="2" ref="1">
    <original>P</original>
    <variation>L</variation>
    <location>
        <position position="281"/>
    </location>
</feature>
<feature type="sequence conflict" description="In Ref. 1; AAC61705." evidence="2" ref="1">
    <original>L</original>
    <variation>R</variation>
    <location>
        <position position="292"/>
    </location>
</feature>
<name>ALR2_ECOL6</name>
<evidence type="ECO:0000250" key="1"/>
<evidence type="ECO:0000305" key="2"/>
<sequence length="356" mass="38869">MTRPIQASLDLQALKQNLSIVRQAAPYARVWSVVKANAYGHGIERIWSALGATDGFALLNLEEAITLRERGWKGPILMLEGFFHAQDLEIYDQHRLTTCVHSNWQLKALQNARLKAPLDIYLKVNSGMNRLGFQPDRVLTVWQQLRAMANVGEMTLMSHFAEAEHPDGISSAMARIEQAAEGLECRRSLANSAATLWHQEAHFDWVRPGIILYGASPSGQWRDIANTGLRPVMTLSSEIIGVQTLKAGERVGYGGRYTARDEQRIGIVAAGYADGYPRHAPTGTPVLVDGVLTMTVGTVSMDMLAVDLTPCPQAGIGTPVELWGKEIKIDDVAAAAGTVGYELMCALALRVPVVTV</sequence>
<keyword id="KW-0413">Isomerase</keyword>
<keyword id="KW-0663">Pyridoxal phosphate</keyword>
<keyword id="KW-1185">Reference proteome</keyword>